<proteinExistence type="inferred from homology"/>
<sequence length="602" mass="69666">MSDDKGTYDPKEGCSDWFVLEAECSDASLDGDLEKLFEEGTDTDISDLIDNEDTVQGNSRELLCQQESEESEQQIHWLKRKYISSQEVLQLSPRLQCISISPQHKSKRRLFEQDSGLELSFNEAQDFTQQTLEVPATDVVPQGAKGLGIVKDLLKCNNVKAMLLAKFKEAFGVGFMELTRQYKSSKTCCRDWVLTVYAVQDELLESSKQLLIQHCAYIWLHQIPPMCLYLLCFNVGKSRETVLRLLTNLLQVSEIQIIAEPPKLRSTLSALFWYKGSMNPNVYAHGEYPEWIMTQTMINHQTAEATQFDLSTMVQYAYDNELSEEAEIAWHYAKLADTDANARAFLQHNSQARLVKDCAIMVRHYRRGEMKEMSMSSWIHKKLLVVEGEGHWSDIVKFVRYQDINFIQFLDSFKSFLHNTPKKSCMLIYGPPDTGKSMFTMSLIKVLKGKVLSFANYKSTFWLQPVADTKIALIDDVTYVCWDYIDQYLRNALDGGVVCLDMKHRAPCQIRFPPLMLTSNIDIMKEERYKYLRSRVQAFAFPHKFPFDSDNNPQFKLTDQSWKSFFERLWRQLELSDQEDEGDDGYSQRTFQCTTRESNGHL</sequence>
<dbReference type="EC" id="5.6.2.4" evidence="1"/>
<dbReference type="EMBL" id="X74468">
    <property type="protein sequence ID" value="CAA52508.1"/>
    <property type="molecule type" value="Genomic_DNA"/>
</dbReference>
<dbReference type="EMBL" id="M96318">
    <property type="protein sequence ID" value="AAA47007.1"/>
    <property type="molecule type" value="Genomic_DNA"/>
</dbReference>
<dbReference type="PIR" id="S36475">
    <property type="entry name" value="S36475"/>
</dbReference>
<dbReference type="SMR" id="Q05135"/>
<dbReference type="Proteomes" id="UP000008232">
    <property type="component" value="Genome"/>
</dbReference>
<dbReference type="GO" id="GO:0042025">
    <property type="term" value="C:host cell nucleus"/>
    <property type="evidence" value="ECO:0007669"/>
    <property type="project" value="UniProtKB-SubCell"/>
</dbReference>
<dbReference type="GO" id="GO:0005524">
    <property type="term" value="F:ATP binding"/>
    <property type="evidence" value="ECO:0007669"/>
    <property type="project" value="UniProtKB-UniRule"/>
</dbReference>
<dbReference type="GO" id="GO:0016887">
    <property type="term" value="F:ATP hydrolysis activity"/>
    <property type="evidence" value="ECO:0007669"/>
    <property type="project" value="RHEA"/>
</dbReference>
<dbReference type="GO" id="GO:0003677">
    <property type="term" value="F:DNA binding"/>
    <property type="evidence" value="ECO:0007669"/>
    <property type="project" value="UniProtKB-UniRule"/>
</dbReference>
<dbReference type="GO" id="GO:0003678">
    <property type="term" value="F:DNA helicase activity"/>
    <property type="evidence" value="ECO:0007669"/>
    <property type="project" value="UniProtKB-UniRule"/>
</dbReference>
<dbReference type="GO" id="GO:0006260">
    <property type="term" value="P:DNA replication"/>
    <property type="evidence" value="ECO:0007669"/>
    <property type="project" value="UniProtKB-UniRule"/>
</dbReference>
<dbReference type="Gene3D" id="3.40.1310.10">
    <property type="match status" value="1"/>
</dbReference>
<dbReference type="Gene3D" id="3.40.50.300">
    <property type="entry name" value="P-loop containing nucleotide triphosphate hydrolases"/>
    <property type="match status" value="1"/>
</dbReference>
<dbReference type="Gene3D" id="1.10.10.510">
    <property type="entry name" value="Zinc finger, large T-antigen D1 domain"/>
    <property type="match status" value="1"/>
</dbReference>
<dbReference type="HAMAP" id="MF_04000">
    <property type="entry name" value="PPV_E1"/>
    <property type="match status" value="1"/>
</dbReference>
<dbReference type="InterPro" id="IPR014015">
    <property type="entry name" value="Helicase_SF3_DNA-vir"/>
</dbReference>
<dbReference type="InterPro" id="IPR027417">
    <property type="entry name" value="P-loop_NTPase"/>
</dbReference>
<dbReference type="InterPro" id="IPR001177">
    <property type="entry name" value="PPV_DNA_helicase_E1_C"/>
</dbReference>
<dbReference type="InterPro" id="IPR014000">
    <property type="entry name" value="PPV_DNA_helicase_E1_N"/>
</dbReference>
<dbReference type="InterPro" id="IPR046832">
    <property type="entry name" value="PPV_E1_DBD"/>
</dbReference>
<dbReference type="InterPro" id="IPR046935">
    <property type="entry name" value="PPV_E1_DBD_sf"/>
</dbReference>
<dbReference type="InterPro" id="IPR016393">
    <property type="entry name" value="Rep_E1_papillomaV"/>
</dbReference>
<dbReference type="InterPro" id="IPR037102">
    <property type="entry name" value="Znf_lg_T-Ag_D1_dom_sf"/>
</dbReference>
<dbReference type="Pfam" id="PF00519">
    <property type="entry name" value="PPV_E1_C"/>
    <property type="match status" value="1"/>
</dbReference>
<dbReference type="Pfam" id="PF20450">
    <property type="entry name" value="PPV_E1_DBD"/>
    <property type="match status" value="1"/>
</dbReference>
<dbReference type="Pfam" id="PF00524">
    <property type="entry name" value="PPV_E1_N"/>
    <property type="match status" value="1"/>
</dbReference>
<dbReference type="PIRSF" id="PIRSF003383">
    <property type="entry name" value="Rep_E1_papillomaV"/>
    <property type="match status" value="1"/>
</dbReference>
<dbReference type="SUPFAM" id="SSF55464">
    <property type="entry name" value="Origin of replication-binding domain, RBD-like"/>
    <property type="match status" value="1"/>
</dbReference>
<dbReference type="SUPFAM" id="SSF52540">
    <property type="entry name" value="P-loop containing nucleoside triphosphate hydrolases"/>
    <property type="match status" value="1"/>
</dbReference>
<dbReference type="PROSITE" id="PS51206">
    <property type="entry name" value="SF3_HELICASE_1"/>
    <property type="match status" value="1"/>
</dbReference>
<protein>
    <recommendedName>
        <fullName evidence="1">Replication protein E1</fullName>
        <ecNumber evidence="1">5.6.2.4</ecNumber>
    </recommendedName>
    <alternativeName>
        <fullName evidence="1">ATP-dependent helicase E1</fullName>
    </alternativeName>
    <alternativeName>
        <fullName evidence="1">DNA 3'-5' helicase E1</fullName>
    </alternativeName>
</protein>
<keyword id="KW-0067">ATP-binding</keyword>
<keyword id="KW-0235">DNA replication</keyword>
<keyword id="KW-0238">DNA-binding</keyword>
<keyword id="KW-0244">Early protein</keyword>
<keyword id="KW-0347">Helicase</keyword>
<keyword id="KW-1048">Host nucleus</keyword>
<keyword id="KW-0378">Hydrolase</keyword>
<keyword id="KW-0413">Isomerase</keyword>
<keyword id="KW-0547">Nucleotide-binding</keyword>
<keyword id="KW-0597">Phosphoprotein</keyword>
<keyword id="KW-1185">Reference proteome</keyword>
<comment type="function">
    <text evidence="1">ATP-dependent DNA 3'-5' helicase required for initiation of viral DNA replication. It forms a complex with the viral E2 protein. The E1-E2 complex binds to the replication origin which contains binding sites for both proteins. During the initial step, a dimer of E1 interacts with a dimer of protein E2 leading to a complex that binds the viral origin of replication with high specificity. Then, a second dimer of E1 displaces the E2 dimer in an ATP-dependent manner to form the E1 tetramer. Following this, two E1 monomers are added to each half of the site, which results in the formation of two E1 trimers on the viral ori. Subsequently, two hexamers will be created. The double hexamer acts as a bi-directional helicase machinery and unwinds the viral DNA and then recruits the host DNA polymerase to start replication.</text>
</comment>
<comment type="catalytic activity">
    <reaction evidence="1">
        <text>Couples ATP hydrolysis with the unwinding of duplex DNA by translocating in the 3'-5' direction.</text>
        <dbReference type="EC" id="5.6.2.4"/>
    </reaction>
</comment>
<comment type="catalytic activity">
    <reaction evidence="1">
        <text>ATP + H2O = ADP + phosphate + H(+)</text>
        <dbReference type="Rhea" id="RHEA:13065"/>
        <dbReference type="ChEBI" id="CHEBI:15377"/>
        <dbReference type="ChEBI" id="CHEBI:15378"/>
        <dbReference type="ChEBI" id="CHEBI:30616"/>
        <dbReference type="ChEBI" id="CHEBI:43474"/>
        <dbReference type="ChEBI" id="CHEBI:456216"/>
        <dbReference type="EC" id="5.6.2.4"/>
    </reaction>
</comment>
<comment type="subunit">
    <text evidence="1">Can form hexamers. Interacts with E2 protein; this interaction increases E1 DNA binding specificity. Interacts with host DNA polymerase subunit POLA2. Interacts with host single stranded DNA-binding protein RPA1. Interacts with host TOP1; this interaction stimulates the enzymatic activity of TOP1.</text>
</comment>
<comment type="subcellular location">
    <subcellularLocation>
        <location evidence="1">Host nucleus</location>
    </subcellularLocation>
</comment>
<comment type="PTM">
    <text evidence="1">Phosphorylated.</text>
</comment>
<comment type="similarity">
    <text evidence="1">Belongs to the papillomaviridae E1 protein family.</text>
</comment>
<organismHost>
    <name type="scientific">Homo sapiens</name>
    <name type="common">Human</name>
    <dbReference type="NCBI Taxonomy" id="9606"/>
</organismHost>
<organism>
    <name type="scientific">Human papillomavirus 15</name>
    <dbReference type="NCBI Taxonomy" id="10606"/>
    <lineage>
        <taxon>Viruses</taxon>
        <taxon>Monodnaviria</taxon>
        <taxon>Shotokuvirae</taxon>
        <taxon>Cossaviricota</taxon>
        <taxon>Papovaviricetes</taxon>
        <taxon>Zurhausenvirales</taxon>
        <taxon>Papillomaviridae</taxon>
        <taxon>Firstpapillomavirinae</taxon>
        <taxon>Betapapillomavirus</taxon>
        <taxon>Betapapillomavirus 2</taxon>
    </lineage>
</organism>
<reference key="1">
    <citation type="journal article" date="1994" name="Curr. Top. Microbiol. Immunol.">
        <title>Primer-directed sequencing of human papillomavirus types.</title>
        <authorList>
            <person name="Delius H."/>
            <person name="Hofmann B."/>
        </authorList>
    </citation>
    <scope>NUCLEOTIDE SEQUENCE [GENOMIC DNA]</scope>
</reference>
<reference key="2">
    <citation type="journal article" date="1992" name="J. Virol.">
        <title>Phylogenetic analysis of 48 papillomavirus types and 28 subtypes and variants: a showcase for the molecular evolution of DNA viruses.</title>
        <authorList>
            <person name="Chan S.-Y."/>
            <person name="Bernard H.U."/>
            <person name="Ong C.K."/>
            <person name="Chan S.P."/>
            <person name="Birgit H."/>
            <person name="Delius H."/>
        </authorList>
    </citation>
    <scope>NUCLEOTIDE SEQUENCE [GENOMIC DNA] OF 329-380</scope>
</reference>
<feature type="chain" id="PRO_0000133113" description="Replication protein E1">
    <location>
        <begin position="1"/>
        <end position="602"/>
    </location>
</feature>
<feature type="domain" description="SF3 helicase" evidence="1">
    <location>
        <begin position="404"/>
        <end position="554"/>
    </location>
</feature>
<feature type="region of interest" description="DNA-binding region" evidence="1">
    <location>
        <begin position="142"/>
        <end position="305"/>
    </location>
</feature>
<feature type="short sequence motif" description="Nuclear localization signal" evidence="1">
    <location>
        <begin position="79"/>
        <end position="81"/>
    </location>
</feature>
<feature type="short sequence motif" description="Nuclear export signal" evidence="1">
    <location>
        <begin position="91"/>
        <end position="100"/>
    </location>
</feature>
<feature type="binding site" evidence="1">
    <location>
        <begin position="430"/>
        <end position="437"/>
    </location>
    <ligand>
        <name>ATP</name>
        <dbReference type="ChEBI" id="CHEBI:30616"/>
    </ligand>
</feature>
<feature type="modified residue" description="Phosphoserine; by host" evidence="1">
    <location>
        <position position="85"/>
    </location>
</feature>
<feature type="modified residue" description="Phosphoserine; by host" evidence="1">
    <location>
        <position position="92"/>
    </location>
</feature>
<evidence type="ECO:0000255" key="1">
    <source>
        <dbReference type="HAMAP-Rule" id="MF_04000"/>
    </source>
</evidence>
<name>VE1_HPV15</name>
<accession>Q05135</accession>
<gene>
    <name evidence="1" type="primary">E1</name>
</gene>